<name>DLTA_BACC1</name>
<comment type="function">
    <text evidence="1">Catalyzes the first step in the D-alanylation of lipoteichoic acid (LTA), the activation of D-alanine and its transfer onto the D-alanyl carrier protein (Dcp) DltC. In an ATP-dependent two-step reaction, forms a high energy D-alanyl-AMP intermediate, followed by transfer of the D-alanyl residue as a thiol ester to the phosphopantheinyl prosthetic group of the Dcp. D-alanylation of LTA plays an important role in modulating the properties of the cell wall in Gram-positive bacteria, influencing the net charge of the cell wall.</text>
</comment>
<comment type="catalytic activity">
    <reaction evidence="1">
        <text>holo-[D-alanyl-carrier protein] + D-alanine + ATP = D-alanyl-[D-alanyl-carrier protein] + AMP + diphosphate</text>
        <dbReference type="Rhea" id="RHEA:55132"/>
        <dbReference type="Rhea" id="RHEA-COMP:14102"/>
        <dbReference type="Rhea" id="RHEA-COMP:14103"/>
        <dbReference type="ChEBI" id="CHEBI:30616"/>
        <dbReference type="ChEBI" id="CHEBI:33019"/>
        <dbReference type="ChEBI" id="CHEBI:57416"/>
        <dbReference type="ChEBI" id="CHEBI:64479"/>
        <dbReference type="ChEBI" id="CHEBI:138620"/>
        <dbReference type="ChEBI" id="CHEBI:456215"/>
        <dbReference type="EC" id="6.2.1.54"/>
    </reaction>
</comment>
<comment type="pathway">
    <text evidence="1">Cell wall biogenesis; lipoteichoic acid biosynthesis.</text>
</comment>
<comment type="subcellular location">
    <subcellularLocation>
        <location evidence="1">Cytoplasm</location>
    </subcellularLocation>
</comment>
<comment type="similarity">
    <text evidence="1">Belongs to the ATP-dependent AMP-binding enzyme family. DltA subfamily.</text>
</comment>
<feature type="chain" id="PRO_1000025525" description="D-alanine--D-alanyl carrier protein ligase">
    <location>
        <begin position="1"/>
        <end position="504"/>
    </location>
</feature>
<feature type="binding site" evidence="1">
    <location>
        <begin position="152"/>
        <end position="153"/>
    </location>
    <ligand>
        <name>ATP</name>
        <dbReference type="ChEBI" id="CHEBI:30616"/>
    </ligand>
</feature>
<feature type="binding site" evidence="1">
    <location>
        <position position="197"/>
    </location>
    <ligand>
        <name>D-alanine</name>
        <dbReference type="ChEBI" id="CHEBI:57416"/>
    </ligand>
</feature>
<feature type="binding site" evidence="1">
    <location>
        <begin position="292"/>
        <end position="297"/>
    </location>
    <ligand>
        <name>ATP</name>
        <dbReference type="ChEBI" id="CHEBI:30616"/>
    </ligand>
</feature>
<feature type="binding site" evidence="1">
    <location>
        <position position="301"/>
    </location>
    <ligand>
        <name>D-alanine</name>
        <dbReference type="ChEBI" id="CHEBI:57416"/>
    </ligand>
</feature>
<feature type="binding site" evidence="1">
    <location>
        <position position="383"/>
    </location>
    <ligand>
        <name>ATP</name>
        <dbReference type="ChEBI" id="CHEBI:30616"/>
    </ligand>
</feature>
<feature type="binding site" evidence="1">
    <location>
        <begin position="394"/>
        <end position="397"/>
    </location>
    <ligand>
        <name>ATP</name>
        <dbReference type="ChEBI" id="CHEBI:30616"/>
    </ligand>
</feature>
<feature type="binding site" evidence="1">
    <location>
        <position position="492"/>
    </location>
    <ligand>
        <name>ATP</name>
        <dbReference type="ChEBI" id="CHEBI:30616"/>
    </ligand>
</feature>
<feature type="binding site" evidence="1">
    <location>
        <position position="492"/>
    </location>
    <ligand>
        <name>D-alanine</name>
        <dbReference type="ChEBI" id="CHEBI:57416"/>
    </ligand>
</feature>
<keyword id="KW-0067">ATP-binding</keyword>
<keyword id="KW-0963">Cytoplasm</keyword>
<keyword id="KW-0436">Ligase</keyword>
<keyword id="KW-0547">Nucleotide-binding</keyword>
<organism>
    <name type="scientific">Bacillus cereus (strain ATCC 10987 / NRS 248)</name>
    <dbReference type="NCBI Taxonomy" id="222523"/>
    <lineage>
        <taxon>Bacteria</taxon>
        <taxon>Bacillati</taxon>
        <taxon>Bacillota</taxon>
        <taxon>Bacilli</taxon>
        <taxon>Bacillales</taxon>
        <taxon>Bacillaceae</taxon>
        <taxon>Bacillus</taxon>
        <taxon>Bacillus cereus group</taxon>
    </lineage>
</organism>
<dbReference type="EC" id="6.2.1.54" evidence="1"/>
<dbReference type="EMBL" id="AE017194">
    <property type="protein sequence ID" value="AAS40416.1"/>
    <property type="molecule type" value="Genomic_DNA"/>
</dbReference>
<dbReference type="SMR" id="Q73BD2"/>
<dbReference type="KEGG" id="bca:BCE_1487"/>
<dbReference type="HOGENOM" id="CLU_000022_2_12_9"/>
<dbReference type="UniPathway" id="UPA00556"/>
<dbReference type="Proteomes" id="UP000002527">
    <property type="component" value="Chromosome"/>
</dbReference>
<dbReference type="GO" id="GO:0005737">
    <property type="term" value="C:cytoplasm"/>
    <property type="evidence" value="ECO:0007669"/>
    <property type="project" value="UniProtKB-SubCell"/>
</dbReference>
<dbReference type="GO" id="GO:0005524">
    <property type="term" value="F:ATP binding"/>
    <property type="evidence" value="ECO:0007669"/>
    <property type="project" value="UniProtKB-KW"/>
</dbReference>
<dbReference type="GO" id="GO:0047473">
    <property type="term" value="F:D-alanine [D-alanyl carrier protein] ligase activity"/>
    <property type="evidence" value="ECO:0007669"/>
    <property type="project" value="UniProtKB-UniRule"/>
</dbReference>
<dbReference type="GO" id="GO:0070395">
    <property type="term" value="P:lipoteichoic acid biosynthetic process"/>
    <property type="evidence" value="ECO:0007669"/>
    <property type="project" value="UniProtKB-UniRule"/>
</dbReference>
<dbReference type="CDD" id="cd05945">
    <property type="entry name" value="DltA"/>
    <property type="match status" value="1"/>
</dbReference>
<dbReference type="FunFam" id="3.30.300.30:FF:000012">
    <property type="entry name" value="D-alanine--D-alanyl carrier protein ligase"/>
    <property type="match status" value="1"/>
</dbReference>
<dbReference type="FunFam" id="3.40.50.12780:FF:000015">
    <property type="entry name" value="D-alanine--D-alanyl carrier protein ligase"/>
    <property type="match status" value="1"/>
</dbReference>
<dbReference type="Gene3D" id="3.30.300.30">
    <property type="match status" value="1"/>
</dbReference>
<dbReference type="Gene3D" id="3.40.50.12780">
    <property type="entry name" value="N-terminal domain of ligase-like"/>
    <property type="match status" value="1"/>
</dbReference>
<dbReference type="HAMAP" id="MF_00593">
    <property type="entry name" value="DltA"/>
    <property type="match status" value="1"/>
</dbReference>
<dbReference type="InterPro" id="IPR010071">
    <property type="entry name" value="AA_adenyl_dom"/>
</dbReference>
<dbReference type="InterPro" id="IPR025110">
    <property type="entry name" value="AMP-bd_C"/>
</dbReference>
<dbReference type="InterPro" id="IPR045851">
    <property type="entry name" value="AMP-bd_C_sf"/>
</dbReference>
<dbReference type="InterPro" id="IPR020845">
    <property type="entry name" value="AMP-binding_CS"/>
</dbReference>
<dbReference type="InterPro" id="IPR000873">
    <property type="entry name" value="AMP-dep_synth/lig_dom"/>
</dbReference>
<dbReference type="InterPro" id="IPR042099">
    <property type="entry name" value="ANL_N_sf"/>
</dbReference>
<dbReference type="InterPro" id="IPR010072">
    <property type="entry name" value="DltA"/>
</dbReference>
<dbReference type="InterPro" id="IPR044507">
    <property type="entry name" value="DltA-like"/>
</dbReference>
<dbReference type="NCBIfam" id="TIGR01733">
    <property type="entry name" value="AA-adenyl-dom"/>
    <property type="match status" value="1"/>
</dbReference>
<dbReference type="NCBIfam" id="TIGR01734">
    <property type="entry name" value="D-ala-DACP-lig"/>
    <property type="match status" value="1"/>
</dbReference>
<dbReference type="NCBIfam" id="NF003417">
    <property type="entry name" value="PRK04813.1"/>
    <property type="match status" value="1"/>
</dbReference>
<dbReference type="PANTHER" id="PTHR45398">
    <property type="match status" value="1"/>
</dbReference>
<dbReference type="PANTHER" id="PTHR45398:SF1">
    <property type="entry name" value="ENZYME, PUTATIVE (JCVI)-RELATED"/>
    <property type="match status" value="1"/>
</dbReference>
<dbReference type="Pfam" id="PF00501">
    <property type="entry name" value="AMP-binding"/>
    <property type="match status" value="1"/>
</dbReference>
<dbReference type="Pfam" id="PF13193">
    <property type="entry name" value="AMP-binding_C"/>
    <property type="match status" value="1"/>
</dbReference>
<dbReference type="SUPFAM" id="SSF56801">
    <property type="entry name" value="Acetyl-CoA synthetase-like"/>
    <property type="match status" value="1"/>
</dbReference>
<dbReference type="PROSITE" id="PS00455">
    <property type="entry name" value="AMP_BINDING"/>
    <property type="match status" value="1"/>
</dbReference>
<gene>
    <name evidence="1" type="primary">dltA</name>
    <name type="ordered locus">BCE_1487</name>
</gene>
<accession>Q73BD2</accession>
<reference key="1">
    <citation type="journal article" date="2004" name="Nucleic Acids Res.">
        <title>The genome sequence of Bacillus cereus ATCC 10987 reveals metabolic adaptations and a large plasmid related to Bacillus anthracis pXO1.</title>
        <authorList>
            <person name="Rasko D.A."/>
            <person name="Ravel J."/>
            <person name="Oekstad O.A."/>
            <person name="Helgason E."/>
            <person name="Cer R.Z."/>
            <person name="Jiang L."/>
            <person name="Shores K.A."/>
            <person name="Fouts D.E."/>
            <person name="Tourasse N.J."/>
            <person name="Angiuoli S.V."/>
            <person name="Kolonay J.F."/>
            <person name="Nelson W.C."/>
            <person name="Kolstoe A.-B."/>
            <person name="Fraser C.M."/>
            <person name="Read T.D."/>
        </authorList>
    </citation>
    <scope>NUCLEOTIDE SEQUENCE [LARGE SCALE GENOMIC DNA]</scope>
    <source>
        <strain>ATCC 10987 / NRS 248</strain>
    </source>
</reference>
<sequence>MKLLEQIEKWAIETPDQTAFVWRDAKITYKQLKEDSDALAHWISSEYPDDRSPIMVYGHMQPEMIINFLGCVKAGHAYIPVDLSIPADRVQRIAENSGAKLLLSGTEVTVTDLPVRIVSEDNLKDIFFTHKGNTPNPEHAVKGDENFYIIYTSGSTGNPKGVQITYNCLVSFTKWAVEDFNLQTGQVFLNQAPFSFDLSVMDIYPSLVTGGTLWAIDKDMIARPKDLFASLEQSDIQVWTSTPSFAEMCLMEASFSESMLPNMKTFLFCGEVLPNEVARKLIERFPKATIMNTYGPTEATVAVTGIHVTEEVLDQYKSLPVGYCKSDCRLLIMKEDGTIAPDGEKGEIVIVGPSVSVGYLGSPELTEKAFTMIDGERAYKTGDAGYVENGLLFYNGRLDFQIKLHGYRMELEEIEHHLRACSYVEGAVIVPIKKGEKYDYLLAVVVPGEHSFEKEFKLTSAIKKELNERLPNYMIPRKFMYQSSIPMTPNGKVDRKKLLSEVTA</sequence>
<protein>
    <recommendedName>
        <fullName evidence="1">D-alanine--D-alanyl carrier protein ligase</fullName>
        <shortName evidence="1">DCL</shortName>
        <ecNumber evidence="1">6.2.1.54</ecNumber>
    </recommendedName>
    <alternativeName>
        <fullName evidence="1">D-alanine--poly(phosphoribitol) ligase subunit 1</fullName>
    </alternativeName>
    <alternativeName>
        <fullName evidence="1">D-alanine-activating enzyme</fullName>
        <shortName evidence="1">DAE</shortName>
    </alternativeName>
</protein>
<proteinExistence type="inferred from homology"/>
<evidence type="ECO:0000255" key="1">
    <source>
        <dbReference type="HAMAP-Rule" id="MF_00593"/>
    </source>
</evidence>